<gene>
    <name type="primary">Igfbp6</name>
    <name type="synonym">Igfbp-6</name>
</gene>
<keyword id="KW-0903">Direct protein sequencing</keyword>
<keyword id="KW-1015">Disulfide bond</keyword>
<keyword id="KW-0325">Glycoprotein</keyword>
<keyword id="KW-0340">Growth factor binding</keyword>
<keyword id="KW-1185">Reference proteome</keyword>
<keyword id="KW-0964">Secreted</keyword>
<keyword id="KW-0732">Signal</keyword>
<comment type="function">
    <text evidence="1">IGF-binding proteins prolong the half-life of the IGFs and have been shown to either inhibit or stimulate the growth promoting effects of the IGFs on cell culture. They alter the interaction of IGFs with their cell surface receptors. Activates the MAPK signaling pathway and induces cell migration.</text>
</comment>
<comment type="subunit">
    <text evidence="1">Interacts (via C-terminal domain) with PHB2.</text>
</comment>
<comment type="subcellular location">
    <subcellularLocation>
        <location>Secreted</location>
    </subcellularLocation>
</comment>
<comment type="PTM">
    <text>O-glycosylated.</text>
</comment>
<feature type="signal peptide" evidence="5">
    <location>
        <begin position="1"/>
        <end position="25"/>
    </location>
</feature>
<feature type="chain" id="PRO_0000014391" description="Insulin-like growth factor-binding protein 6">
    <location>
        <begin position="26"/>
        <end position="226"/>
    </location>
</feature>
<feature type="domain" description="IGFBP N-terminal" evidence="3">
    <location>
        <begin position="26"/>
        <end position="99"/>
    </location>
</feature>
<feature type="domain" description="Thyroglobulin type-1" evidence="2">
    <location>
        <begin position="145"/>
        <end position="220"/>
    </location>
</feature>
<feature type="region of interest" description="Disordered" evidence="4">
    <location>
        <begin position="92"/>
        <end position="148"/>
    </location>
</feature>
<feature type="region of interest" description="Disordered" evidence="4">
    <location>
        <begin position="205"/>
        <end position="226"/>
    </location>
</feature>
<feature type="compositionally biased region" description="Basic and acidic residues" evidence="4">
    <location>
        <begin position="101"/>
        <end position="126"/>
    </location>
</feature>
<feature type="compositionally biased region" description="Polar residues" evidence="4">
    <location>
        <begin position="214"/>
        <end position="226"/>
    </location>
</feature>
<feature type="disulfide bond" evidence="3">
    <location>
        <begin position="30"/>
        <end position="33"/>
    </location>
</feature>
<feature type="disulfide bond" evidence="3">
    <location>
        <begin position="49"/>
        <end position="55"/>
    </location>
</feature>
<feature type="disulfide bond" evidence="3">
    <location>
        <begin position="63"/>
        <end position="76"/>
    </location>
</feature>
<feature type="disulfide bond" evidence="3">
    <location>
        <begin position="70"/>
        <end position="96"/>
    </location>
</feature>
<feature type="disulfide bond" evidence="2">
    <location>
        <begin position="148"/>
        <end position="176"/>
    </location>
</feature>
<feature type="disulfide bond" evidence="2">
    <location>
        <begin position="187"/>
        <end position="198"/>
    </location>
</feature>
<feature type="disulfide bond" evidence="2">
    <location>
        <begin position="200"/>
        <end position="220"/>
    </location>
</feature>
<evidence type="ECO:0000250" key="1">
    <source>
        <dbReference type="UniProtKB" id="P24592"/>
    </source>
</evidence>
<evidence type="ECO:0000255" key="2">
    <source>
        <dbReference type="PROSITE-ProRule" id="PRU00500"/>
    </source>
</evidence>
<evidence type="ECO:0000255" key="3">
    <source>
        <dbReference type="PROSITE-ProRule" id="PRU00653"/>
    </source>
</evidence>
<evidence type="ECO:0000256" key="4">
    <source>
        <dbReference type="SAM" id="MobiDB-lite"/>
    </source>
</evidence>
<evidence type="ECO:0000269" key="5">
    <source>
    </source>
</evidence>
<protein>
    <recommendedName>
        <fullName>Insulin-like growth factor-binding protein 6</fullName>
        <shortName>IBP-6</shortName>
        <shortName>IGF-binding protein 6</shortName>
        <shortName>IGFBP-6</shortName>
    </recommendedName>
</protein>
<accession>P35572</accession>
<accession>Q499W1</accession>
<organism>
    <name type="scientific">Rattus norvegicus</name>
    <name type="common">Rat</name>
    <dbReference type="NCBI Taxonomy" id="10116"/>
    <lineage>
        <taxon>Eukaryota</taxon>
        <taxon>Metazoa</taxon>
        <taxon>Chordata</taxon>
        <taxon>Craniata</taxon>
        <taxon>Vertebrata</taxon>
        <taxon>Euteleostomi</taxon>
        <taxon>Mammalia</taxon>
        <taxon>Eutheria</taxon>
        <taxon>Euarchontoglires</taxon>
        <taxon>Glires</taxon>
        <taxon>Rodentia</taxon>
        <taxon>Myomorpha</taxon>
        <taxon>Muroidea</taxon>
        <taxon>Muridae</taxon>
        <taxon>Murinae</taxon>
        <taxon>Rattus</taxon>
    </lineage>
</organism>
<dbReference type="EMBL" id="M69055">
    <property type="protein sequence ID" value="AAA42019.1"/>
    <property type="molecule type" value="mRNA"/>
</dbReference>
<dbReference type="EMBL" id="L11006">
    <property type="status" value="NOT_ANNOTATED_CDS"/>
    <property type="molecule type" value="Genomic_DNA"/>
</dbReference>
<dbReference type="EMBL" id="BC099742">
    <property type="protein sequence ID" value="AAH99742.1"/>
    <property type="molecule type" value="mRNA"/>
</dbReference>
<dbReference type="PIR" id="JN0464">
    <property type="entry name" value="JN0464"/>
</dbReference>
<dbReference type="RefSeq" id="NP_037236.1">
    <property type="nucleotide sequence ID" value="NM_013104.3"/>
</dbReference>
<dbReference type="SMR" id="P35572"/>
<dbReference type="FunCoup" id="P35572">
    <property type="interactions" value="83"/>
</dbReference>
<dbReference type="STRING" id="10116.ENSRNOP00000014807"/>
<dbReference type="MEROPS" id="I31.952"/>
<dbReference type="PhosphoSitePlus" id="P35572"/>
<dbReference type="PaxDb" id="10116-ENSRNOP00000014807"/>
<dbReference type="Ensembl" id="ENSRNOT00000014807.7">
    <property type="protein sequence ID" value="ENSRNOP00000014807.3"/>
    <property type="gene ID" value="ENSRNOG00000010977.7"/>
</dbReference>
<dbReference type="GeneID" id="25641"/>
<dbReference type="KEGG" id="rno:25641"/>
<dbReference type="AGR" id="RGD:2877"/>
<dbReference type="CTD" id="3489"/>
<dbReference type="RGD" id="2877">
    <property type="gene designation" value="Igfbp6"/>
</dbReference>
<dbReference type="eggNOG" id="ENOG502QV3Q">
    <property type="taxonomic scope" value="Eukaryota"/>
</dbReference>
<dbReference type="GeneTree" id="ENSGT00940000160528"/>
<dbReference type="HOGENOM" id="CLU_070833_1_0_1"/>
<dbReference type="InParanoid" id="P35572"/>
<dbReference type="OMA" id="CVDELGA"/>
<dbReference type="OrthoDB" id="8875634at2759"/>
<dbReference type="PhylomeDB" id="P35572"/>
<dbReference type="TreeFam" id="TF331211"/>
<dbReference type="Reactome" id="R-RNO-381426">
    <property type="pathway name" value="Regulation of Insulin-like Growth Factor (IGF) transport and uptake by Insulin-like Growth Factor Binding Proteins (IGFBPs)"/>
</dbReference>
<dbReference type="PRO" id="PR:P35572"/>
<dbReference type="Proteomes" id="UP000002494">
    <property type="component" value="Chromosome 7"/>
</dbReference>
<dbReference type="Bgee" id="ENSRNOG00000010977">
    <property type="expression patterns" value="Expressed in esophagus and 20 other cell types or tissues"/>
</dbReference>
<dbReference type="GO" id="GO:0005615">
    <property type="term" value="C:extracellular space"/>
    <property type="evidence" value="ECO:0000314"/>
    <property type="project" value="RGD"/>
</dbReference>
<dbReference type="GO" id="GO:0042568">
    <property type="term" value="C:insulin-like growth factor binary complex"/>
    <property type="evidence" value="ECO:0000266"/>
    <property type="project" value="RGD"/>
</dbReference>
<dbReference type="GO" id="GO:0001968">
    <property type="term" value="F:fibronectin binding"/>
    <property type="evidence" value="ECO:0000318"/>
    <property type="project" value="GO_Central"/>
</dbReference>
<dbReference type="GO" id="GO:0042802">
    <property type="term" value="F:identical protein binding"/>
    <property type="evidence" value="ECO:0000266"/>
    <property type="project" value="RGD"/>
</dbReference>
<dbReference type="GO" id="GO:0031994">
    <property type="term" value="F:insulin-like growth factor I binding"/>
    <property type="evidence" value="ECO:0000353"/>
    <property type="project" value="RGD"/>
</dbReference>
<dbReference type="GO" id="GO:0031995">
    <property type="term" value="F:insulin-like growth factor II binding"/>
    <property type="evidence" value="ECO:0000353"/>
    <property type="project" value="RGD"/>
</dbReference>
<dbReference type="GO" id="GO:0016477">
    <property type="term" value="P:cell migration"/>
    <property type="evidence" value="ECO:0000250"/>
    <property type="project" value="UniProtKB"/>
</dbReference>
<dbReference type="GO" id="GO:0043410">
    <property type="term" value="P:positive regulation of MAPK cascade"/>
    <property type="evidence" value="ECO:0000250"/>
    <property type="project" value="UniProtKB"/>
</dbReference>
<dbReference type="GO" id="GO:0032874">
    <property type="term" value="P:positive regulation of stress-activated MAPK cascade"/>
    <property type="evidence" value="ECO:0000266"/>
    <property type="project" value="RGD"/>
</dbReference>
<dbReference type="GO" id="GO:0043567">
    <property type="term" value="P:regulation of insulin-like growth factor receptor signaling pathway"/>
    <property type="evidence" value="ECO:0000318"/>
    <property type="project" value="GO_Central"/>
</dbReference>
<dbReference type="CDD" id="cd00191">
    <property type="entry name" value="TY"/>
    <property type="match status" value="1"/>
</dbReference>
<dbReference type="FunFam" id="4.10.800.10:FF:000010">
    <property type="entry name" value="Insulin-like growth factor binding protein 6"/>
    <property type="match status" value="1"/>
</dbReference>
<dbReference type="FunFam" id="4.10.40.20:FF:000005">
    <property type="entry name" value="Insulin-like growth factor-binding protein 6"/>
    <property type="match status" value="1"/>
</dbReference>
<dbReference type="Gene3D" id="4.10.40.20">
    <property type="match status" value="1"/>
</dbReference>
<dbReference type="Gene3D" id="4.10.800.10">
    <property type="entry name" value="Thyroglobulin type-1"/>
    <property type="match status" value="1"/>
</dbReference>
<dbReference type="InterPro" id="IPR009030">
    <property type="entry name" value="Growth_fac_rcpt_cys_sf"/>
</dbReference>
<dbReference type="InterPro" id="IPR022326">
    <property type="entry name" value="IGFBP-6"/>
</dbReference>
<dbReference type="InterPro" id="IPR000867">
    <property type="entry name" value="IGFBP-like"/>
</dbReference>
<dbReference type="InterPro" id="IPR022321">
    <property type="entry name" value="IGFBP_1-6_chordata"/>
</dbReference>
<dbReference type="InterPro" id="IPR000716">
    <property type="entry name" value="Thyroglobulin_1"/>
</dbReference>
<dbReference type="InterPro" id="IPR036857">
    <property type="entry name" value="Thyroglobulin_1_sf"/>
</dbReference>
<dbReference type="PANTHER" id="PTHR11551">
    <property type="entry name" value="INSULIN-LIKE GROWTH FACTOR BINDING PROTEIN"/>
    <property type="match status" value="1"/>
</dbReference>
<dbReference type="PANTHER" id="PTHR11551:SF14">
    <property type="entry name" value="INSULIN-LIKE GROWTH FACTOR-BINDING PROTEIN 6"/>
    <property type="match status" value="1"/>
</dbReference>
<dbReference type="Pfam" id="PF00086">
    <property type="entry name" value="Thyroglobulin_1"/>
    <property type="match status" value="1"/>
</dbReference>
<dbReference type="PRINTS" id="PR01976">
    <property type="entry name" value="IGFBPFAMILY"/>
</dbReference>
<dbReference type="PRINTS" id="PR01982">
    <property type="entry name" value="IGFBPFAMILY6"/>
</dbReference>
<dbReference type="SMART" id="SM00121">
    <property type="entry name" value="IB"/>
    <property type="match status" value="1"/>
</dbReference>
<dbReference type="SMART" id="SM00211">
    <property type="entry name" value="TY"/>
    <property type="match status" value="1"/>
</dbReference>
<dbReference type="SUPFAM" id="SSF57184">
    <property type="entry name" value="Growth factor receptor domain"/>
    <property type="match status" value="1"/>
</dbReference>
<dbReference type="SUPFAM" id="SSF57610">
    <property type="entry name" value="Thyroglobulin type-1 domain"/>
    <property type="match status" value="1"/>
</dbReference>
<dbReference type="PROSITE" id="PS51323">
    <property type="entry name" value="IGFBP_N_2"/>
    <property type="match status" value="1"/>
</dbReference>
<dbReference type="PROSITE" id="PS00484">
    <property type="entry name" value="THYROGLOBULIN_1_1"/>
    <property type="match status" value="1"/>
</dbReference>
<dbReference type="PROSITE" id="PS51162">
    <property type="entry name" value="THYROGLOBULIN_1_2"/>
    <property type="match status" value="1"/>
</dbReference>
<reference key="1">
    <citation type="journal article" date="1991" name="Mol. Endocrinol.">
        <title>Isolation and molecular cloning of insulin-like growth factor-binding protein-6.</title>
        <authorList>
            <person name="Shimasaki S."/>
            <person name="Gao L."/>
            <person name="Shimonaka M."/>
            <person name="Ling N."/>
        </authorList>
    </citation>
    <scope>NUCLEOTIDE SEQUENCE [MRNA]</scope>
</reference>
<reference key="2">
    <citation type="journal article" date="1993" name="Biochem. Biophys. Res. Commun.">
        <title>Structural characterization of the rat insulin-like growth factor binding protein-6 gene.</title>
        <authorList>
            <person name="Zhu X."/>
            <person name="Ling N."/>
            <person name="Shimasaki S."/>
        </authorList>
    </citation>
    <scope>NUCLEOTIDE SEQUENCE [GENOMIC DNA]</scope>
    <source>
        <strain>Sprague-Dawley</strain>
    </source>
</reference>
<reference key="3">
    <citation type="journal article" date="2004" name="Genome Res.">
        <title>The status, quality, and expansion of the NIH full-length cDNA project: the Mammalian Gene Collection (MGC).</title>
        <authorList>
            <consortium name="The MGC Project Team"/>
        </authorList>
    </citation>
    <scope>NUCLEOTIDE SEQUENCE [LARGE SCALE MRNA]</scope>
    <source>
        <tissue>Prostate</tissue>
    </source>
</reference>
<reference key="4">
    <citation type="journal article" date="1991" name="J. Biol. Chem.">
        <title>Identification of five different insulin-like growth factor binding proteins (IGFBPs) from adult rat serum and molecular cloning of a novel IGFBP-5 in rat and human.</title>
        <authorList>
            <person name="Shimasaki S."/>
            <person name="Shimonaka M."/>
            <person name="Zhang H.-P."/>
            <person name="Ling N."/>
        </authorList>
    </citation>
    <scope>PROTEIN SEQUENCE OF 26-38</scope>
</reference>
<name>IBP6_RAT</name>
<sequence length="226" mass="24193">MTWDGLPTQPLLMLLMLLFAAGSESALAGCPGCGPGVQEEDAGSPADGCAETGGCFRREGQPCGVYIPKCAPGLQCQPRENEETPLRALLIGQGRCQRARGPSEETTKESKPHGGASRPRDRDRQKNPRTSAAPIRPSPVQDGEMGPCRRHLDSVLQQLQTEVFRGGANGLYVPNCDLRGFYRKQQCRSSQGNRRGPCWCVDPMGQPLPVSPDGQGSSQCSARSSG</sequence>
<proteinExistence type="evidence at protein level"/>